<dbReference type="EC" id="2.8.2.33"/>
<dbReference type="EMBL" id="AF320786">
    <property type="protein sequence ID" value="AAK69604.1"/>
    <property type="molecule type" value="mRNA"/>
</dbReference>
<dbReference type="EMBL" id="AB187269">
    <property type="protein sequence ID" value="BAD89559.1"/>
    <property type="molecule type" value="mRNA"/>
</dbReference>
<dbReference type="EMBL" id="AK122324">
    <property type="protein sequence ID" value="BAC65606.1"/>
    <property type="status" value="ALT_INIT"/>
    <property type="molecule type" value="mRNA"/>
</dbReference>
<dbReference type="EMBL" id="AK019474">
    <property type="protein sequence ID" value="BAB31743.1"/>
    <property type="molecule type" value="mRNA"/>
</dbReference>
<dbReference type="EMBL" id="AK035637">
    <property type="protein sequence ID" value="BAC29133.1"/>
    <property type="molecule type" value="mRNA"/>
</dbReference>
<dbReference type="EMBL" id="AK043803">
    <property type="protein sequence ID" value="BAC31658.1"/>
    <property type="molecule type" value="mRNA"/>
</dbReference>
<dbReference type="EMBL" id="AK082318">
    <property type="protein sequence ID" value="BAC38463.1"/>
    <property type="molecule type" value="mRNA"/>
</dbReference>
<dbReference type="EMBL" id="AK083614">
    <property type="protein sequence ID" value="BAC38968.1"/>
    <property type="molecule type" value="mRNA"/>
</dbReference>
<dbReference type="EMBL" id="BC031443">
    <property type="protein sequence ID" value="AAH31443.1"/>
    <property type="molecule type" value="mRNA"/>
</dbReference>
<dbReference type="CCDS" id="CCDS21922.1"/>
<dbReference type="RefSeq" id="NP_001347697.1">
    <property type="nucleotide sequence ID" value="NM_001360768.1"/>
</dbReference>
<dbReference type="RefSeq" id="NP_084211.2">
    <property type="nucleotide sequence ID" value="NM_029935.5"/>
</dbReference>
<dbReference type="RefSeq" id="XP_006508395.1">
    <property type="nucleotide sequence ID" value="XM_006508332.2"/>
</dbReference>
<dbReference type="RefSeq" id="XP_006508396.1">
    <property type="nucleotide sequence ID" value="XM_006508333.3"/>
</dbReference>
<dbReference type="RefSeq" id="XP_017167875.1">
    <property type="nucleotide sequence ID" value="XM_017312386.1"/>
</dbReference>
<dbReference type="FunCoup" id="Q91XQ5">
    <property type="interactions" value="141"/>
</dbReference>
<dbReference type="STRING" id="10090.ENSMUSP00000076682"/>
<dbReference type="GlyCosmos" id="Q91XQ5">
    <property type="glycosylation" value="1 site, No reported glycans"/>
</dbReference>
<dbReference type="GlyGen" id="Q91XQ5">
    <property type="glycosylation" value="3 sites, 1 N-linked glycan (2 sites)"/>
</dbReference>
<dbReference type="iPTMnet" id="Q91XQ5"/>
<dbReference type="PhosphoSitePlus" id="Q91XQ5"/>
<dbReference type="jPOST" id="Q91XQ5"/>
<dbReference type="PaxDb" id="10090-ENSMUSP00000079105"/>
<dbReference type="ProteomicsDB" id="281681"/>
<dbReference type="Antibodypedia" id="2663">
    <property type="antibodies" value="69 antibodies from 23 providers"/>
</dbReference>
<dbReference type="Ensembl" id="ENSMUST00000077472.10">
    <property type="protein sequence ID" value="ENSMUSP00000076682.4"/>
    <property type="gene ID" value="ENSMUSG00000030930.15"/>
</dbReference>
<dbReference type="Ensembl" id="ENSMUST00000080215.6">
    <property type="protein sequence ID" value="ENSMUSP00000079105.6"/>
    <property type="gene ID" value="ENSMUSG00000030930.15"/>
</dbReference>
<dbReference type="GeneID" id="77590"/>
<dbReference type="KEGG" id="mmu:77590"/>
<dbReference type="UCSC" id="uc009kbx.1">
    <property type="organism name" value="mouse"/>
</dbReference>
<dbReference type="AGR" id="MGI:1924840"/>
<dbReference type="CTD" id="51363"/>
<dbReference type="MGI" id="MGI:1924840">
    <property type="gene designation" value="Chst15"/>
</dbReference>
<dbReference type="VEuPathDB" id="HostDB:ENSMUSG00000030930"/>
<dbReference type="eggNOG" id="ENOG502QU6N">
    <property type="taxonomic scope" value="Eukaryota"/>
</dbReference>
<dbReference type="GeneTree" id="ENSGT00390000004719"/>
<dbReference type="HOGENOM" id="CLU_017703_2_1_1"/>
<dbReference type="InParanoid" id="Q91XQ5"/>
<dbReference type="OMA" id="HKQQVGC"/>
<dbReference type="OrthoDB" id="8068875at2759"/>
<dbReference type="PhylomeDB" id="Q91XQ5"/>
<dbReference type="TreeFam" id="TF333516"/>
<dbReference type="BRENDA" id="2.8.2.33">
    <property type="organism ID" value="3474"/>
</dbReference>
<dbReference type="Reactome" id="R-MMU-2022870">
    <property type="pathway name" value="Chondroitin sulfate biosynthesis"/>
</dbReference>
<dbReference type="BioGRID-ORCS" id="77590">
    <property type="hits" value="2 hits in 77 CRISPR screens"/>
</dbReference>
<dbReference type="PRO" id="PR:Q91XQ5"/>
<dbReference type="Proteomes" id="UP000000589">
    <property type="component" value="Chromosome 7"/>
</dbReference>
<dbReference type="RNAct" id="Q91XQ5">
    <property type="molecule type" value="protein"/>
</dbReference>
<dbReference type="Bgee" id="ENSMUSG00000030930">
    <property type="expression patterns" value="Expressed in epithelium of cochlear duct and 283 other cell types or tissues"/>
</dbReference>
<dbReference type="GO" id="GO:0000139">
    <property type="term" value="C:Golgi membrane"/>
    <property type="evidence" value="ECO:0007669"/>
    <property type="project" value="UniProtKB-SubCell"/>
</dbReference>
<dbReference type="GO" id="GO:0050656">
    <property type="term" value="F:3'-phosphoadenosine 5'-phosphosulfate binding"/>
    <property type="evidence" value="ECO:0000250"/>
    <property type="project" value="UniProtKB"/>
</dbReference>
<dbReference type="GO" id="GO:0050659">
    <property type="term" value="F:N-acetylgalactosamine 4-sulfate 6-O-sulfotransferase activity"/>
    <property type="evidence" value="ECO:0000250"/>
    <property type="project" value="UniProtKB"/>
</dbReference>
<dbReference type="GO" id="GO:0019319">
    <property type="term" value="P:hexose biosynthetic process"/>
    <property type="evidence" value="ECO:0000250"/>
    <property type="project" value="UniProtKB"/>
</dbReference>
<dbReference type="FunFam" id="3.40.50.300:FF:001079">
    <property type="entry name" value="carbohydrate sulfotransferase 15"/>
    <property type="match status" value="1"/>
</dbReference>
<dbReference type="Gene3D" id="3.40.50.300">
    <property type="entry name" value="P-loop containing nucleotide triphosphate hydrolases"/>
    <property type="match status" value="1"/>
</dbReference>
<dbReference type="InterPro" id="IPR052654">
    <property type="entry name" value="CS_Sulfotransferase"/>
</dbReference>
<dbReference type="InterPro" id="IPR027417">
    <property type="entry name" value="P-loop_NTPase"/>
</dbReference>
<dbReference type="InterPro" id="IPR000863">
    <property type="entry name" value="Sulfotransferase_dom"/>
</dbReference>
<dbReference type="PANTHER" id="PTHR15723">
    <property type="entry name" value="CARBOHYDRATE SULFOTRANSFERASE 15"/>
    <property type="match status" value="1"/>
</dbReference>
<dbReference type="PANTHER" id="PTHR15723:SF0">
    <property type="entry name" value="CARBOHYDRATE SULFOTRANSFERASE 15"/>
    <property type="match status" value="1"/>
</dbReference>
<dbReference type="Pfam" id="PF00685">
    <property type="entry name" value="Sulfotransfer_1"/>
    <property type="match status" value="1"/>
</dbReference>
<dbReference type="SUPFAM" id="SSF52540">
    <property type="entry name" value="P-loop containing nucleoside triphosphate hydrolases"/>
    <property type="match status" value="1"/>
</dbReference>
<feature type="chain" id="PRO_0000225624" description="Carbohydrate sulfotransferase 15">
    <location>
        <begin position="1"/>
        <end position="561"/>
    </location>
</feature>
<feature type="topological domain" description="Cytoplasmic" evidence="2">
    <location>
        <begin position="1"/>
        <end position="80"/>
    </location>
</feature>
<feature type="transmembrane region" description="Helical; Signal-anchor for type II membrane protein" evidence="2">
    <location>
        <begin position="81"/>
        <end position="101"/>
    </location>
</feature>
<feature type="topological domain" description="Lumenal" evidence="2">
    <location>
        <begin position="102"/>
        <end position="561"/>
    </location>
</feature>
<feature type="binding site" evidence="1">
    <location>
        <begin position="263"/>
        <end position="267"/>
    </location>
    <ligand>
        <name>3'-phosphoadenylyl sulfate</name>
        <dbReference type="ChEBI" id="CHEBI:58339"/>
    </ligand>
</feature>
<feature type="binding site" evidence="1">
    <location>
        <position position="392"/>
    </location>
    <ligand>
        <name>3'-phosphoadenylyl sulfate</name>
        <dbReference type="ChEBI" id="CHEBI:58339"/>
    </ligand>
</feature>
<feature type="binding site" evidence="1">
    <location>
        <position position="400"/>
    </location>
    <ligand>
        <name>3'-phosphoadenylyl sulfate</name>
        <dbReference type="ChEBI" id="CHEBI:58339"/>
    </ligand>
</feature>
<feature type="glycosylation site" description="N-linked (GlcNAc...) asparagine" evidence="2">
    <location>
        <position position="364"/>
    </location>
</feature>
<feature type="sequence conflict" description="In Ref. 4; BAB31743." evidence="3" ref="4">
    <original>G</original>
    <variation>S</variation>
    <location>
        <position position="115"/>
    </location>
</feature>
<feature type="sequence conflict" description="In Ref. 4; BAC31658." evidence="3" ref="4">
    <original>I</original>
    <variation>V</variation>
    <location>
        <position position="535"/>
    </location>
</feature>
<organism>
    <name type="scientific">Mus musculus</name>
    <name type="common">Mouse</name>
    <dbReference type="NCBI Taxonomy" id="10090"/>
    <lineage>
        <taxon>Eukaryota</taxon>
        <taxon>Metazoa</taxon>
        <taxon>Chordata</taxon>
        <taxon>Craniata</taxon>
        <taxon>Vertebrata</taxon>
        <taxon>Euteleostomi</taxon>
        <taxon>Mammalia</taxon>
        <taxon>Eutheria</taxon>
        <taxon>Euarchontoglires</taxon>
        <taxon>Glires</taxon>
        <taxon>Rodentia</taxon>
        <taxon>Myomorpha</taxon>
        <taxon>Muroidea</taxon>
        <taxon>Muridae</taxon>
        <taxon>Murinae</taxon>
        <taxon>Mus</taxon>
        <taxon>Mus</taxon>
    </lineage>
</organism>
<sequence>MRHCINCCVQLFPEDTHKQQVACQGGPHHSHQACPTCKGENKILFRVDSKQMNLLAVLEVRTEGNENWGGFLRFRKGKRCSLVFGLIIMTLVMASYILSGAHQELLISSPFHYGGFPSNPSVMDGENPSDVKEHHYQPSVNNISYVKDYPSIKLIIDSIAARIEFTTRQLPDLQDLKRQELHMFSVIPSKFLPTSKSPCWYEEFSGRNTTDPYLTNSYVLYSKRFRSTFDALRKVFWGHLSHVQGKHFRLRCLPHFYIIGQPKCGTTDLYDRLRLHPEVKFSAIKEPHWWTRKRFGIVRLRDGLRDRYPVEDYLDLFDLAAHQIHQGLQAASAEQPSKMNKIIIGEASASTMWDNNAWTFFYDNSTDGEPPFLTQDFIHAFQPEAKLIVMLRDPVERLYSDYLYFASSNKSADDFHEKVTEALQLFENCMLDYSLRACVYNNTLNNAMPVRLQVGLYAVYLLDWLTVFSKEQFLILRLEDHASNVKYTMHKVFQFLNLGPLSEKQEALMTKSPASNTRRPEDRSLGPMWPITQKILREFYGPFNTRLAQVLDDEAFAWKTT</sequence>
<accession>Q91XQ5</accession>
<accession>Q80TW4</accession>
<accession>Q8BLQ5</accession>
<accession>Q9D2N6</accession>
<comment type="function">
    <text evidence="1">Sulfotransferase that transfers sulfate from 3'-phosphoadenosine 5'-phosphosulfate (PAPS) to the C-6 hydroxyl group of the GalNAc 4-sulfate residue of chondroitin sulfate A and forms chondroitin sulfate E containing GlcA-GalNAc(4,6-SO(4)) repeating units. It also transfers sulfate to a unique non-reducing terminal sequence, GalNAc(4SO4)-GlcA(2SO4)-GalNAc(6SO4), to yield a highly sulfated structure similar to the structure found in thrombomodulin chondroitin sulfate. May also act as a B-cell receptor involved in BCR ligation-mediated early activation that mediate regulatory signals key to B-cell development and/or regulation of B-cell-specific RAG expression; however such results are unclear in vivo (By similarity).</text>
</comment>
<comment type="catalytic activity">
    <reaction>
        <text>dermatan 4'-sulfate + n 3'-phosphoadenylyl sulfate = dermatan 4',6'-bissulfate + n adenosine 3',5'-bisphosphate + n H(+)</text>
        <dbReference type="Rhea" id="RHEA:54304"/>
        <dbReference type="Rhea" id="RHEA-COMP:9965"/>
        <dbReference type="Rhea" id="RHEA-COMP:13850"/>
        <dbReference type="ChEBI" id="CHEBI:15378"/>
        <dbReference type="ChEBI" id="CHEBI:58339"/>
        <dbReference type="ChEBI" id="CHEBI:58343"/>
        <dbReference type="ChEBI" id="CHEBI:58465"/>
        <dbReference type="ChEBI" id="CHEBI:138121"/>
        <dbReference type="EC" id="2.8.2.33"/>
    </reaction>
</comment>
<comment type="catalytic activity">
    <reaction>
        <text>chondroitin 4'-sulfate + n 3'-phosphoadenylyl sulfate = chondroitin 4',6'-bissulfate + n adenosine 3',5'-bisphosphate + n H(+)</text>
        <dbReference type="Rhea" id="RHEA:54300"/>
        <dbReference type="Rhea" id="RHEA-COMP:9829"/>
        <dbReference type="Rhea" id="RHEA-COMP:13849"/>
        <dbReference type="ChEBI" id="CHEBI:15378"/>
        <dbReference type="ChEBI" id="CHEBI:58339"/>
        <dbReference type="ChEBI" id="CHEBI:58343"/>
        <dbReference type="ChEBI" id="CHEBI:58422"/>
        <dbReference type="ChEBI" id="CHEBI:138112"/>
        <dbReference type="EC" id="2.8.2.33"/>
    </reaction>
</comment>
<comment type="cofactor">
    <cofactor evidence="1">
        <name>a divalent metal cation</name>
        <dbReference type="ChEBI" id="CHEBI:60240"/>
    </cofactor>
</comment>
<comment type="cofactor">
    <cofactor evidence="1">
        <name>glutathione</name>
        <dbReference type="ChEBI" id="CHEBI:57925"/>
    </cofactor>
</comment>
<comment type="activity regulation">
    <text>Inhibited by phenyl beta-GalNAc(4,6-SO(4)).</text>
</comment>
<comment type="subunit">
    <text evidence="1 3">Homodimer; disulfide-linked (Potential). The relevance of homodimerization is however unsure. May interact with phosphorylated proteins in resting B-cells, including HCK (By similarity).</text>
</comment>
<comment type="subcellular location">
    <subcellularLocation>
        <location evidence="3">Golgi apparatus membrane</location>
        <topology evidence="3">Single-pass type II membrane protein</topology>
    </subcellularLocation>
    <text>A small fraction may also be present at the cell surface, where it acts as a B-cell receptor.</text>
</comment>
<comment type="PTM">
    <text evidence="1">Glycosylated.</text>
</comment>
<comment type="similarity">
    <text evidence="3">Belongs to the sulfotransferase 1 family.</text>
</comment>
<comment type="sequence caution" evidence="3">
    <conflict type="erroneous initiation">
        <sequence resource="EMBL-CDS" id="BAC65606"/>
    </conflict>
</comment>
<gene>
    <name type="primary">Chst15</name>
    <name type="synonym">Brag</name>
    <name type="synonym">Galnac4s6st</name>
    <name type="synonym">Kiaa0598</name>
</gene>
<protein>
    <recommendedName>
        <fullName>Carbohydrate sulfotransferase 15</fullName>
        <ecNumber>2.8.2.33</ecNumber>
    </recommendedName>
    <alternativeName>
        <fullName>B-cell RAG-associated gene protein</fullName>
    </alternativeName>
    <alternativeName>
        <fullName>N-acetylgalactosamine 4-sulfate 6-O-sulfotransferase</fullName>
        <shortName>GalNAc4S-6ST</shortName>
    </alternativeName>
</protein>
<evidence type="ECO:0000250" key="1"/>
<evidence type="ECO:0000255" key="2"/>
<evidence type="ECO:0000305" key="3"/>
<proteinExistence type="evidence at transcript level"/>
<name>CHSTF_MOUSE</name>
<reference key="1">
    <citation type="journal article" date="1998" name="Eur. J. Immunol.">
        <title>hBRAG, a novel B cell lineage cDNA encoding a type II transmembrane glycoprotein potentially involved in the regulation of recombination activating gene 1 (RAG1).</title>
        <authorList>
            <person name="Verkoczy L.K."/>
            <person name="Marsden P.A."/>
            <person name="Berinstein N.L."/>
        </authorList>
    </citation>
    <scope>NUCLEOTIDE SEQUENCE [MRNA]</scope>
</reference>
<reference key="2">
    <citation type="submission" date="2004-08" db="EMBL/GenBank/DDBJ databases">
        <title>Characterization of GalNAc 4-sulfate 6-O-sulfotransferase expressed in bone marrow derived mast cells synthesizing chondroitin sulfate E.</title>
        <authorList>
            <person name="Ohtake S."/>
            <person name="Morisaki T."/>
            <person name="Kondo S."/>
            <person name="Matsumura K."/>
            <person name="Kimata K."/>
            <person name="Habuchi O."/>
        </authorList>
    </citation>
    <scope>NUCLEOTIDE SEQUENCE [MRNA]</scope>
</reference>
<reference key="3">
    <citation type="journal article" date="2003" name="DNA Res.">
        <title>Prediction of the coding sequences of mouse homologues of KIAA gene: II. The complete nucleotide sequences of 400 mouse KIAA-homologous cDNAs identified by screening of terminal sequences of cDNA clones randomly sampled from size-fractionated libraries.</title>
        <authorList>
            <person name="Okazaki N."/>
            <person name="Kikuno R."/>
            <person name="Ohara R."/>
            <person name="Inamoto S."/>
            <person name="Aizawa H."/>
            <person name="Yuasa S."/>
            <person name="Nakajima D."/>
            <person name="Nagase T."/>
            <person name="Ohara O."/>
            <person name="Koga H."/>
        </authorList>
    </citation>
    <scope>NUCLEOTIDE SEQUENCE [LARGE SCALE MRNA]</scope>
    <source>
        <tissue>Brain</tissue>
    </source>
</reference>
<reference key="4">
    <citation type="journal article" date="2005" name="Science">
        <title>The transcriptional landscape of the mammalian genome.</title>
        <authorList>
            <person name="Carninci P."/>
            <person name="Kasukawa T."/>
            <person name="Katayama S."/>
            <person name="Gough J."/>
            <person name="Frith M.C."/>
            <person name="Maeda N."/>
            <person name="Oyama R."/>
            <person name="Ravasi T."/>
            <person name="Lenhard B."/>
            <person name="Wells C."/>
            <person name="Kodzius R."/>
            <person name="Shimokawa K."/>
            <person name="Bajic V.B."/>
            <person name="Brenner S.E."/>
            <person name="Batalov S."/>
            <person name="Forrest A.R."/>
            <person name="Zavolan M."/>
            <person name="Davis M.J."/>
            <person name="Wilming L.G."/>
            <person name="Aidinis V."/>
            <person name="Allen J.E."/>
            <person name="Ambesi-Impiombato A."/>
            <person name="Apweiler R."/>
            <person name="Aturaliya R.N."/>
            <person name="Bailey T.L."/>
            <person name="Bansal M."/>
            <person name="Baxter L."/>
            <person name="Beisel K.W."/>
            <person name="Bersano T."/>
            <person name="Bono H."/>
            <person name="Chalk A.M."/>
            <person name="Chiu K.P."/>
            <person name="Choudhary V."/>
            <person name="Christoffels A."/>
            <person name="Clutterbuck D.R."/>
            <person name="Crowe M.L."/>
            <person name="Dalla E."/>
            <person name="Dalrymple B.P."/>
            <person name="de Bono B."/>
            <person name="Della Gatta G."/>
            <person name="di Bernardo D."/>
            <person name="Down T."/>
            <person name="Engstrom P."/>
            <person name="Fagiolini M."/>
            <person name="Faulkner G."/>
            <person name="Fletcher C.F."/>
            <person name="Fukushima T."/>
            <person name="Furuno M."/>
            <person name="Futaki S."/>
            <person name="Gariboldi M."/>
            <person name="Georgii-Hemming P."/>
            <person name="Gingeras T.R."/>
            <person name="Gojobori T."/>
            <person name="Green R.E."/>
            <person name="Gustincich S."/>
            <person name="Harbers M."/>
            <person name="Hayashi Y."/>
            <person name="Hensch T.K."/>
            <person name="Hirokawa N."/>
            <person name="Hill D."/>
            <person name="Huminiecki L."/>
            <person name="Iacono M."/>
            <person name="Ikeo K."/>
            <person name="Iwama A."/>
            <person name="Ishikawa T."/>
            <person name="Jakt M."/>
            <person name="Kanapin A."/>
            <person name="Katoh M."/>
            <person name="Kawasawa Y."/>
            <person name="Kelso J."/>
            <person name="Kitamura H."/>
            <person name="Kitano H."/>
            <person name="Kollias G."/>
            <person name="Krishnan S.P."/>
            <person name="Kruger A."/>
            <person name="Kummerfeld S.K."/>
            <person name="Kurochkin I.V."/>
            <person name="Lareau L.F."/>
            <person name="Lazarevic D."/>
            <person name="Lipovich L."/>
            <person name="Liu J."/>
            <person name="Liuni S."/>
            <person name="McWilliam S."/>
            <person name="Madan Babu M."/>
            <person name="Madera M."/>
            <person name="Marchionni L."/>
            <person name="Matsuda H."/>
            <person name="Matsuzawa S."/>
            <person name="Miki H."/>
            <person name="Mignone F."/>
            <person name="Miyake S."/>
            <person name="Morris K."/>
            <person name="Mottagui-Tabar S."/>
            <person name="Mulder N."/>
            <person name="Nakano N."/>
            <person name="Nakauchi H."/>
            <person name="Ng P."/>
            <person name="Nilsson R."/>
            <person name="Nishiguchi S."/>
            <person name="Nishikawa S."/>
            <person name="Nori F."/>
            <person name="Ohara O."/>
            <person name="Okazaki Y."/>
            <person name="Orlando V."/>
            <person name="Pang K.C."/>
            <person name="Pavan W.J."/>
            <person name="Pavesi G."/>
            <person name="Pesole G."/>
            <person name="Petrovsky N."/>
            <person name="Piazza S."/>
            <person name="Reed J."/>
            <person name="Reid J.F."/>
            <person name="Ring B.Z."/>
            <person name="Ringwald M."/>
            <person name="Rost B."/>
            <person name="Ruan Y."/>
            <person name="Salzberg S.L."/>
            <person name="Sandelin A."/>
            <person name="Schneider C."/>
            <person name="Schoenbach C."/>
            <person name="Sekiguchi K."/>
            <person name="Semple C.A."/>
            <person name="Seno S."/>
            <person name="Sessa L."/>
            <person name="Sheng Y."/>
            <person name="Shibata Y."/>
            <person name="Shimada H."/>
            <person name="Shimada K."/>
            <person name="Silva D."/>
            <person name="Sinclair B."/>
            <person name="Sperling S."/>
            <person name="Stupka E."/>
            <person name="Sugiura K."/>
            <person name="Sultana R."/>
            <person name="Takenaka Y."/>
            <person name="Taki K."/>
            <person name="Tammoja K."/>
            <person name="Tan S.L."/>
            <person name="Tang S."/>
            <person name="Taylor M.S."/>
            <person name="Tegner J."/>
            <person name="Teichmann S.A."/>
            <person name="Ueda H.R."/>
            <person name="van Nimwegen E."/>
            <person name="Verardo R."/>
            <person name="Wei C.L."/>
            <person name="Yagi K."/>
            <person name="Yamanishi H."/>
            <person name="Zabarovsky E."/>
            <person name="Zhu S."/>
            <person name="Zimmer A."/>
            <person name="Hide W."/>
            <person name="Bult C."/>
            <person name="Grimmond S.M."/>
            <person name="Teasdale R.D."/>
            <person name="Liu E.T."/>
            <person name="Brusic V."/>
            <person name="Quackenbush J."/>
            <person name="Wahlestedt C."/>
            <person name="Mattick J.S."/>
            <person name="Hume D.A."/>
            <person name="Kai C."/>
            <person name="Sasaki D."/>
            <person name="Tomaru Y."/>
            <person name="Fukuda S."/>
            <person name="Kanamori-Katayama M."/>
            <person name="Suzuki M."/>
            <person name="Aoki J."/>
            <person name="Arakawa T."/>
            <person name="Iida J."/>
            <person name="Imamura K."/>
            <person name="Itoh M."/>
            <person name="Kato T."/>
            <person name="Kawaji H."/>
            <person name="Kawagashira N."/>
            <person name="Kawashima T."/>
            <person name="Kojima M."/>
            <person name="Kondo S."/>
            <person name="Konno H."/>
            <person name="Nakano K."/>
            <person name="Ninomiya N."/>
            <person name="Nishio T."/>
            <person name="Okada M."/>
            <person name="Plessy C."/>
            <person name="Shibata K."/>
            <person name="Shiraki T."/>
            <person name="Suzuki S."/>
            <person name="Tagami M."/>
            <person name="Waki K."/>
            <person name="Watahiki A."/>
            <person name="Okamura-Oho Y."/>
            <person name="Suzuki H."/>
            <person name="Kawai J."/>
            <person name="Hayashizaki Y."/>
        </authorList>
    </citation>
    <scope>NUCLEOTIDE SEQUENCE [LARGE SCALE MRNA]</scope>
    <source>
        <strain>C57BL/6J</strain>
        <tissue>Brain cortex</tissue>
        <tissue>Cerebellum</tissue>
        <tissue>Skin</tissue>
        <tissue>Urinary bladder</tissue>
    </source>
</reference>
<reference key="5">
    <citation type="journal article" date="2004" name="Genome Res.">
        <title>The status, quality, and expansion of the NIH full-length cDNA project: the Mammalian Gene Collection (MGC).</title>
        <authorList>
            <consortium name="The MGC Project Team"/>
        </authorList>
    </citation>
    <scope>NUCLEOTIDE SEQUENCE [LARGE SCALE MRNA]</scope>
    <source>
        <strain>FVB/N</strain>
        <tissue>Kidney</tissue>
    </source>
</reference>
<keyword id="KW-1015">Disulfide bond</keyword>
<keyword id="KW-0325">Glycoprotein</keyword>
<keyword id="KW-0333">Golgi apparatus</keyword>
<keyword id="KW-0472">Membrane</keyword>
<keyword id="KW-1185">Reference proteome</keyword>
<keyword id="KW-0735">Signal-anchor</keyword>
<keyword id="KW-0808">Transferase</keyword>
<keyword id="KW-0812">Transmembrane</keyword>
<keyword id="KW-1133">Transmembrane helix</keyword>